<gene>
    <name evidence="1" type="primary">ihfB</name>
    <name evidence="1" type="synonym">himD</name>
    <name type="ordered locus">SFV_0913</name>
</gene>
<dbReference type="EMBL" id="CP000266">
    <property type="protein sequence ID" value="ABF03135.1"/>
    <property type="molecule type" value="Genomic_DNA"/>
</dbReference>
<dbReference type="RefSeq" id="WP_000167336.1">
    <property type="nucleotide sequence ID" value="NC_008258.1"/>
</dbReference>
<dbReference type="SMR" id="Q0SX03"/>
<dbReference type="GeneID" id="93776505"/>
<dbReference type="KEGG" id="sfv:SFV_0913"/>
<dbReference type="HOGENOM" id="CLU_105066_2_0_6"/>
<dbReference type="Proteomes" id="UP000000659">
    <property type="component" value="Chromosome"/>
</dbReference>
<dbReference type="GO" id="GO:0005694">
    <property type="term" value="C:chromosome"/>
    <property type="evidence" value="ECO:0007669"/>
    <property type="project" value="InterPro"/>
</dbReference>
<dbReference type="GO" id="GO:0005829">
    <property type="term" value="C:cytosol"/>
    <property type="evidence" value="ECO:0007669"/>
    <property type="project" value="TreeGrafter"/>
</dbReference>
<dbReference type="GO" id="GO:0003677">
    <property type="term" value="F:DNA binding"/>
    <property type="evidence" value="ECO:0007669"/>
    <property type="project" value="UniProtKB-UniRule"/>
</dbReference>
<dbReference type="GO" id="GO:0030527">
    <property type="term" value="F:structural constituent of chromatin"/>
    <property type="evidence" value="ECO:0007669"/>
    <property type="project" value="InterPro"/>
</dbReference>
<dbReference type="GO" id="GO:0006310">
    <property type="term" value="P:DNA recombination"/>
    <property type="evidence" value="ECO:0007669"/>
    <property type="project" value="UniProtKB-UniRule"/>
</dbReference>
<dbReference type="GO" id="GO:0006355">
    <property type="term" value="P:regulation of DNA-templated transcription"/>
    <property type="evidence" value="ECO:0007669"/>
    <property type="project" value="UniProtKB-UniRule"/>
</dbReference>
<dbReference type="GO" id="GO:0006417">
    <property type="term" value="P:regulation of translation"/>
    <property type="evidence" value="ECO:0007669"/>
    <property type="project" value="UniProtKB-UniRule"/>
</dbReference>
<dbReference type="CDD" id="cd13836">
    <property type="entry name" value="IHF_B"/>
    <property type="match status" value="1"/>
</dbReference>
<dbReference type="FunFam" id="4.10.520.10:FF:000003">
    <property type="entry name" value="Integration host factor subunit beta"/>
    <property type="match status" value="1"/>
</dbReference>
<dbReference type="Gene3D" id="4.10.520.10">
    <property type="entry name" value="IHF-like DNA-binding proteins"/>
    <property type="match status" value="1"/>
</dbReference>
<dbReference type="HAMAP" id="MF_00381">
    <property type="entry name" value="IHF_beta"/>
    <property type="match status" value="1"/>
</dbReference>
<dbReference type="InterPro" id="IPR000119">
    <property type="entry name" value="Hist_DNA-bd"/>
</dbReference>
<dbReference type="InterPro" id="IPR020816">
    <property type="entry name" value="Histone-like_DNA-bd_CS"/>
</dbReference>
<dbReference type="InterPro" id="IPR010992">
    <property type="entry name" value="IHF-like_DNA-bd_dom_sf"/>
</dbReference>
<dbReference type="InterPro" id="IPR005685">
    <property type="entry name" value="IHF_beta"/>
</dbReference>
<dbReference type="NCBIfam" id="TIGR00988">
    <property type="entry name" value="hip"/>
    <property type="match status" value="1"/>
</dbReference>
<dbReference type="NCBIfam" id="NF001222">
    <property type="entry name" value="PRK00199.1"/>
    <property type="match status" value="1"/>
</dbReference>
<dbReference type="PANTHER" id="PTHR33175">
    <property type="entry name" value="DNA-BINDING PROTEIN HU"/>
    <property type="match status" value="1"/>
</dbReference>
<dbReference type="PANTHER" id="PTHR33175:SF5">
    <property type="entry name" value="INTEGRATION HOST FACTOR SUBUNIT BETA"/>
    <property type="match status" value="1"/>
</dbReference>
<dbReference type="Pfam" id="PF00216">
    <property type="entry name" value="Bac_DNA_binding"/>
    <property type="match status" value="1"/>
</dbReference>
<dbReference type="PRINTS" id="PR01727">
    <property type="entry name" value="DNABINDINGHU"/>
</dbReference>
<dbReference type="SMART" id="SM00411">
    <property type="entry name" value="BHL"/>
    <property type="match status" value="1"/>
</dbReference>
<dbReference type="SUPFAM" id="SSF47729">
    <property type="entry name" value="IHF-like DNA-binding proteins"/>
    <property type="match status" value="1"/>
</dbReference>
<dbReference type="PROSITE" id="PS00045">
    <property type="entry name" value="HISTONE_LIKE"/>
    <property type="match status" value="1"/>
</dbReference>
<name>IHFB_SHIF8</name>
<comment type="function">
    <text evidence="1">This protein is one of the two subunits of integration host factor, a specific DNA-binding protein that functions in genetic recombination as well as in transcriptional and translational control.</text>
</comment>
<comment type="subunit">
    <text evidence="1">Heterodimer of an alpha and a beta chain.</text>
</comment>
<comment type="similarity">
    <text evidence="1">Belongs to the bacterial histone-like protein family.</text>
</comment>
<proteinExistence type="inferred from homology"/>
<accession>Q0SX03</accession>
<organism>
    <name type="scientific">Shigella flexneri serotype 5b (strain 8401)</name>
    <dbReference type="NCBI Taxonomy" id="373384"/>
    <lineage>
        <taxon>Bacteria</taxon>
        <taxon>Pseudomonadati</taxon>
        <taxon>Pseudomonadota</taxon>
        <taxon>Gammaproteobacteria</taxon>
        <taxon>Enterobacterales</taxon>
        <taxon>Enterobacteriaceae</taxon>
        <taxon>Shigella</taxon>
    </lineage>
</organism>
<sequence>MTKSELIERLATQQSHIPAKTVEDAVKEMLEHMASTLAQGERIEIRGFGSFSLHYRAPRTGRNPKTGDKVELEGKYVPHFKPGKELRDRANIYG</sequence>
<feature type="chain" id="PRO_1000060667" description="Integration host factor subunit beta">
    <location>
        <begin position="1"/>
        <end position="94"/>
    </location>
</feature>
<evidence type="ECO:0000255" key="1">
    <source>
        <dbReference type="HAMAP-Rule" id="MF_00381"/>
    </source>
</evidence>
<protein>
    <recommendedName>
        <fullName evidence="1">Integration host factor subunit beta</fullName>
        <shortName evidence="1">IHF-beta</shortName>
    </recommendedName>
</protein>
<keyword id="KW-0233">DNA recombination</keyword>
<keyword id="KW-0238">DNA-binding</keyword>
<keyword id="KW-0804">Transcription</keyword>
<keyword id="KW-0805">Transcription regulation</keyword>
<keyword id="KW-0810">Translation regulation</keyword>
<reference key="1">
    <citation type="journal article" date="2006" name="BMC Genomics">
        <title>Complete genome sequence of Shigella flexneri 5b and comparison with Shigella flexneri 2a.</title>
        <authorList>
            <person name="Nie H."/>
            <person name="Yang F."/>
            <person name="Zhang X."/>
            <person name="Yang J."/>
            <person name="Chen L."/>
            <person name="Wang J."/>
            <person name="Xiong Z."/>
            <person name="Peng J."/>
            <person name="Sun L."/>
            <person name="Dong J."/>
            <person name="Xue Y."/>
            <person name="Xu X."/>
            <person name="Chen S."/>
            <person name="Yao Z."/>
            <person name="Shen Y."/>
            <person name="Jin Q."/>
        </authorList>
    </citation>
    <scope>NUCLEOTIDE SEQUENCE [LARGE SCALE GENOMIC DNA]</scope>
    <source>
        <strain>8401</strain>
    </source>
</reference>